<proteinExistence type="inferred from homology"/>
<sequence length="227" mass="24993">MEISYHGHSIVKIQTNGKTILIDPFINGNGQTDLKVAEEAPDIILLTHGHNDHVGDTIELAKKKDALVIAPNELANWISWQGVKTHPMHIGGAKEFDFGKVKFTQAFHGSSYVTDTKEIIYMGMPAGILLFVEGLTIYHAGDTALFSDMKLIGERHPIDIAFLPIGDNFTMGPEDAACAVSFLQPKIVVPIHYNTFPPIEQDPQIFADLVQNSEVQILKAGEKVNCF</sequence>
<protein>
    <recommendedName>
        <fullName evidence="1">UPF0173 metal-dependent hydrolase Bsph_4138</fullName>
    </recommendedName>
</protein>
<gene>
    <name type="ordered locus">Bsph_4138</name>
</gene>
<reference key="1">
    <citation type="journal article" date="2008" name="J. Bacteriol.">
        <title>Complete genome sequence of the mosquitocidal bacterium Bacillus sphaericus C3-41 and comparison with those of closely related Bacillus species.</title>
        <authorList>
            <person name="Hu X."/>
            <person name="Fan W."/>
            <person name="Han B."/>
            <person name="Liu H."/>
            <person name="Zheng D."/>
            <person name="Li Q."/>
            <person name="Dong W."/>
            <person name="Yan J."/>
            <person name="Gao M."/>
            <person name="Berry C."/>
            <person name="Yuan Z."/>
        </authorList>
    </citation>
    <scope>NUCLEOTIDE SEQUENCE [LARGE SCALE GENOMIC DNA]</scope>
    <source>
        <strain>C3-41</strain>
    </source>
</reference>
<feature type="chain" id="PRO_0000367188" description="UPF0173 metal-dependent hydrolase Bsph_4138">
    <location>
        <begin position="1"/>
        <end position="227"/>
    </location>
</feature>
<comment type="similarity">
    <text evidence="1">Belongs to the UPF0173 family.</text>
</comment>
<comment type="sequence caution" evidence="2">
    <conflict type="erroneous initiation">
        <sequence resource="EMBL-CDS" id="ACA41599"/>
    </conflict>
</comment>
<organism>
    <name type="scientific">Lysinibacillus sphaericus (strain C3-41)</name>
    <dbReference type="NCBI Taxonomy" id="444177"/>
    <lineage>
        <taxon>Bacteria</taxon>
        <taxon>Bacillati</taxon>
        <taxon>Bacillota</taxon>
        <taxon>Bacilli</taxon>
        <taxon>Bacillales</taxon>
        <taxon>Bacillaceae</taxon>
        <taxon>Lysinibacillus</taxon>
    </lineage>
</organism>
<evidence type="ECO:0000255" key="1">
    <source>
        <dbReference type="HAMAP-Rule" id="MF_00457"/>
    </source>
</evidence>
<evidence type="ECO:0000305" key="2"/>
<accession>B1HX23</accession>
<name>Y4138_LYSSC</name>
<keyword id="KW-0378">Hydrolase</keyword>
<dbReference type="EMBL" id="CP000817">
    <property type="protein sequence ID" value="ACA41599.1"/>
    <property type="status" value="ALT_INIT"/>
    <property type="molecule type" value="Genomic_DNA"/>
</dbReference>
<dbReference type="RefSeq" id="WP_031418620.1">
    <property type="nucleotide sequence ID" value="NC_010382.1"/>
</dbReference>
<dbReference type="SMR" id="B1HX23"/>
<dbReference type="EnsemblBacteria" id="ACA41599">
    <property type="protein sequence ID" value="ACA41599"/>
    <property type="gene ID" value="Bsph_4138"/>
</dbReference>
<dbReference type="KEGG" id="lsp:Bsph_4138"/>
<dbReference type="HOGENOM" id="CLU_070010_4_1_9"/>
<dbReference type="Proteomes" id="UP000002164">
    <property type="component" value="Chromosome"/>
</dbReference>
<dbReference type="GO" id="GO:0016787">
    <property type="term" value="F:hydrolase activity"/>
    <property type="evidence" value="ECO:0007669"/>
    <property type="project" value="UniProtKB-UniRule"/>
</dbReference>
<dbReference type="Gene3D" id="3.60.15.10">
    <property type="entry name" value="Ribonuclease Z/Hydroxyacylglutathione hydrolase-like"/>
    <property type="match status" value="1"/>
</dbReference>
<dbReference type="HAMAP" id="MF_00457">
    <property type="entry name" value="UPF0173"/>
    <property type="match status" value="1"/>
</dbReference>
<dbReference type="InterPro" id="IPR001279">
    <property type="entry name" value="Metallo-B-lactamas"/>
</dbReference>
<dbReference type="InterPro" id="IPR036866">
    <property type="entry name" value="RibonucZ/Hydroxyglut_hydro"/>
</dbReference>
<dbReference type="InterPro" id="IPR022877">
    <property type="entry name" value="UPF0173"/>
</dbReference>
<dbReference type="InterPro" id="IPR050114">
    <property type="entry name" value="UPF0173_UPF0282_UlaG_hydrolase"/>
</dbReference>
<dbReference type="NCBIfam" id="NF001911">
    <property type="entry name" value="PRK00685.1"/>
    <property type="match status" value="1"/>
</dbReference>
<dbReference type="PANTHER" id="PTHR43546:SF3">
    <property type="entry name" value="UPF0173 METAL-DEPENDENT HYDROLASE MJ1163"/>
    <property type="match status" value="1"/>
</dbReference>
<dbReference type="PANTHER" id="PTHR43546">
    <property type="entry name" value="UPF0173 METAL-DEPENDENT HYDROLASE MJ1163-RELATED"/>
    <property type="match status" value="1"/>
</dbReference>
<dbReference type="Pfam" id="PF13483">
    <property type="entry name" value="Lactamase_B_3"/>
    <property type="match status" value="1"/>
</dbReference>
<dbReference type="SMART" id="SM00849">
    <property type="entry name" value="Lactamase_B"/>
    <property type="match status" value="1"/>
</dbReference>
<dbReference type="SUPFAM" id="SSF56281">
    <property type="entry name" value="Metallo-hydrolase/oxidoreductase"/>
    <property type="match status" value="1"/>
</dbReference>